<keyword id="KW-0414">Isoprene biosynthesis</keyword>
<keyword id="KW-0479">Metal-binding</keyword>
<keyword id="KW-0520">NAD</keyword>
<keyword id="KW-0560">Oxidoreductase</keyword>
<keyword id="KW-0862">Zinc</keyword>
<protein>
    <recommendedName>
        <fullName evidence="4">Alcohol dehydrogenase 1</fullName>
        <shortName evidence="4">TcADH1</shortName>
        <ecNumber evidence="1">1.1.1.-</ecNumber>
    </recommendedName>
</protein>
<comment type="cofactor">
    <cofactor evidence="2">
        <name>Zn(2+)</name>
        <dbReference type="ChEBI" id="CHEBI:29105"/>
    </cofactor>
    <text evidence="2">Binds 2 Zn(2+) ions per subunit.</text>
</comment>
<comment type="pathway">
    <text evidence="1">Isoprenoid biosynthesis.</text>
</comment>
<comment type="subunit">
    <text evidence="2">Homodimer.</text>
</comment>
<comment type="tissue specificity">
    <text evidence="3">Expressed in flowers and disk florets.</text>
</comment>
<comment type="similarity">
    <text evidence="5">Belongs to the zinc-containing alcohol dehydrogenase family. Class-IV subfamily.</text>
</comment>
<feature type="chain" id="PRO_0000447848" description="Alcohol dehydrogenase 1">
    <location>
        <begin position="1"/>
        <end position="378"/>
    </location>
</feature>
<feature type="binding site" evidence="2">
    <location>
        <position position="48"/>
    </location>
    <ligand>
        <name>Zn(2+)</name>
        <dbReference type="ChEBI" id="CHEBI:29105"/>
        <label>1</label>
        <note>catalytic</note>
    </ligand>
</feature>
<feature type="binding site" evidence="2">
    <location>
        <begin position="49"/>
        <end position="53"/>
    </location>
    <ligand>
        <name>NAD(+)</name>
        <dbReference type="ChEBI" id="CHEBI:57540"/>
    </ligand>
</feature>
<feature type="binding site" evidence="2">
    <location>
        <position position="69"/>
    </location>
    <ligand>
        <name>Zn(2+)</name>
        <dbReference type="ChEBI" id="CHEBI:29105"/>
        <label>1</label>
        <note>catalytic</note>
    </ligand>
</feature>
<feature type="binding site" evidence="2">
    <location>
        <position position="99"/>
    </location>
    <ligand>
        <name>Zn(2+)</name>
        <dbReference type="ChEBI" id="CHEBI:29105"/>
        <label>2</label>
    </ligand>
</feature>
<feature type="binding site" evidence="2">
    <location>
        <position position="102"/>
    </location>
    <ligand>
        <name>Zn(2+)</name>
        <dbReference type="ChEBI" id="CHEBI:29105"/>
        <label>2</label>
    </ligand>
</feature>
<feature type="binding site" evidence="2">
    <location>
        <position position="105"/>
    </location>
    <ligand>
        <name>Zn(2+)</name>
        <dbReference type="ChEBI" id="CHEBI:29105"/>
        <label>2</label>
    </ligand>
</feature>
<feature type="binding site" evidence="2">
    <location>
        <position position="113"/>
    </location>
    <ligand>
        <name>Zn(2+)</name>
        <dbReference type="ChEBI" id="CHEBI:29105"/>
        <label>2</label>
    </ligand>
</feature>
<feature type="binding site" evidence="2">
    <location>
        <position position="177"/>
    </location>
    <ligand>
        <name>Zn(2+)</name>
        <dbReference type="ChEBI" id="CHEBI:29105"/>
        <label>1</label>
        <note>catalytic</note>
    </ligand>
</feature>
<feature type="binding site" evidence="2">
    <location>
        <begin position="202"/>
        <end position="207"/>
    </location>
    <ligand>
        <name>NAD(+)</name>
        <dbReference type="ChEBI" id="CHEBI:57540"/>
    </ligand>
</feature>
<feature type="binding site" evidence="2">
    <location>
        <position position="226"/>
    </location>
    <ligand>
        <name>NAD(+)</name>
        <dbReference type="ChEBI" id="CHEBI:57540"/>
    </ligand>
</feature>
<feature type="binding site" evidence="2">
    <location>
        <position position="231"/>
    </location>
    <ligand>
        <name>NAD(+)</name>
        <dbReference type="ChEBI" id="CHEBI:57540"/>
    </ligand>
</feature>
<feature type="binding site" evidence="2">
    <location>
        <begin position="274"/>
        <end position="276"/>
    </location>
    <ligand>
        <name>NAD(+)</name>
        <dbReference type="ChEBI" id="CHEBI:57540"/>
    </ligand>
</feature>
<feature type="binding site" evidence="2">
    <location>
        <begin position="297"/>
        <end position="299"/>
    </location>
    <ligand>
        <name>NAD(+)</name>
        <dbReference type="ChEBI" id="CHEBI:57540"/>
    </ligand>
</feature>
<feature type="binding site" evidence="2">
    <location>
        <begin position="321"/>
        <end position="323"/>
    </location>
    <ligand>
        <name>NAD(+)</name>
        <dbReference type="ChEBI" id="CHEBI:57540"/>
    </ligand>
</feature>
<gene>
    <name evidence="4" type="primary">ADH1</name>
</gene>
<dbReference type="EC" id="1.1.1.-" evidence="1"/>
<dbReference type="EMBL" id="MF497443">
    <property type="protein sequence ID" value="AUQ44117.1"/>
    <property type="molecule type" value="mRNA"/>
</dbReference>
<dbReference type="SMR" id="A0A2I7G3B2"/>
<dbReference type="GO" id="GO:0005829">
    <property type="term" value="C:cytosol"/>
    <property type="evidence" value="ECO:0007669"/>
    <property type="project" value="TreeGrafter"/>
</dbReference>
<dbReference type="GO" id="GO:0051903">
    <property type="term" value="F:S-(hydroxymethyl)glutathione dehydrogenase [NAD(P)+] activity"/>
    <property type="evidence" value="ECO:0007669"/>
    <property type="project" value="TreeGrafter"/>
</dbReference>
<dbReference type="GO" id="GO:0008270">
    <property type="term" value="F:zinc ion binding"/>
    <property type="evidence" value="ECO:0007669"/>
    <property type="project" value="InterPro"/>
</dbReference>
<dbReference type="GO" id="GO:0046294">
    <property type="term" value="P:formaldehyde catabolic process"/>
    <property type="evidence" value="ECO:0007669"/>
    <property type="project" value="TreeGrafter"/>
</dbReference>
<dbReference type="GO" id="GO:0008299">
    <property type="term" value="P:isoprenoid biosynthetic process"/>
    <property type="evidence" value="ECO:0007669"/>
    <property type="project" value="UniProtKB-KW"/>
</dbReference>
<dbReference type="CDD" id="cd08277">
    <property type="entry name" value="liver_alcohol_DH_like"/>
    <property type="match status" value="1"/>
</dbReference>
<dbReference type="FunFam" id="3.90.180.10:FF:000067">
    <property type="entry name" value="alcohol dehydrogenase 1-like isoform X1"/>
    <property type="match status" value="1"/>
</dbReference>
<dbReference type="FunFam" id="3.40.50.720:FF:000003">
    <property type="entry name" value="S-(hydroxymethyl)glutathione dehydrogenase"/>
    <property type="match status" value="1"/>
</dbReference>
<dbReference type="Gene3D" id="3.90.180.10">
    <property type="entry name" value="Medium-chain alcohol dehydrogenases, catalytic domain"/>
    <property type="match status" value="1"/>
</dbReference>
<dbReference type="Gene3D" id="3.40.50.720">
    <property type="entry name" value="NAD(P)-binding Rossmann-like Domain"/>
    <property type="match status" value="1"/>
</dbReference>
<dbReference type="InterPro" id="IPR013149">
    <property type="entry name" value="ADH-like_C"/>
</dbReference>
<dbReference type="InterPro" id="IPR013154">
    <property type="entry name" value="ADH-like_N"/>
</dbReference>
<dbReference type="InterPro" id="IPR002328">
    <property type="entry name" value="ADH_Zn_CS"/>
</dbReference>
<dbReference type="InterPro" id="IPR011032">
    <property type="entry name" value="GroES-like_sf"/>
</dbReference>
<dbReference type="InterPro" id="IPR036291">
    <property type="entry name" value="NAD(P)-bd_dom_sf"/>
</dbReference>
<dbReference type="InterPro" id="IPR020843">
    <property type="entry name" value="PKS_ER"/>
</dbReference>
<dbReference type="PANTHER" id="PTHR43880">
    <property type="entry name" value="ALCOHOL DEHYDROGENASE"/>
    <property type="match status" value="1"/>
</dbReference>
<dbReference type="PANTHER" id="PTHR43880:SF38">
    <property type="entry name" value="ALCOHOL DEHYDROGENASE-RELATED"/>
    <property type="match status" value="1"/>
</dbReference>
<dbReference type="Pfam" id="PF08240">
    <property type="entry name" value="ADH_N"/>
    <property type="match status" value="1"/>
</dbReference>
<dbReference type="Pfam" id="PF00107">
    <property type="entry name" value="ADH_zinc_N"/>
    <property type="match status" value="1"/>
</dbReference>
<dbReference type="SMART" id="SM00829">
    <property type="entry name" value="PKS_ER"/>
    <property type="match status" value="1"/>
</dbReference>
<dbReference type="SUPFAM" id="SSF50129">
    <property type="entry name" value="GroES-like"/>
    <property type="match status" value="2"/>
</dbReference>
<dbReference type="SUPFAM" id="SSF51735">
    <property type="entry name" value="NAD(P)-binding Rossmann-fold domains"/>
    <property type="match status" value="1"/>
</dbReference>
<dbReference type="PROSITE" id="PS00059">
    <property type="entry name" value="ADH_ZINC"/>
    <property type="match status" value="1"/>
</dbReference>
<reference key="1">
    <citation type="journal article" date="2018" name="Plant Physiol.">
        <title>Coexpression analysis identifies two oxidoreductases involved in the biosynthesis of the monoterpene acid moiety of natural pyrethrin insecticides in Tanacetum cinerariifolium.</title>
        <authorList>
            <person name="Xu H."/>
            <person name="Moghe G.D."/>
            <person name="Wiegert-Rininger K."/>
            <person name="Schilmiller A.L."/>
            <person name="Barry C.S."/>
            <person name="Last R.L."/>
            <person name="Pichersky E."/>
        </authorList>
    </citation>
    <scope>NUCLEOTIDE SEQUENCE [MRNA]</scope>
    <scope>TISSUE SPECIFICITY</scope>
</reference>
<sequence>MAHKAPSVITCKAAVVWELGGPVVLEEIKVDPPKASEVRIKMLCASICHTDVLCTKGFPIPLFPRIPGHEGVGVIESVGIDAKGLKPGDIVMPLYLGECGQCLNCKTGKTNLCHVYPPPFSGLMNDGTSRMTIARTGESIYHFTSCSTWTEYAVADCNYVLKIDPKISYPHASFLSCGFTTGFGATWRETQVSKGSSVAVFGIGTVGLGVIKGAQLAGASKIIGVDVNQYKAAKGKVFGMTDFINPKDHPNKTVSELVKEITHGLGVDYCFECTGVPSLLNEALEASKFGIGTVVPIGAGGEASVAINSLILFSGRTLKCTTFGGVRTQSDLPVIIDKCLNKEIQLDELLTHEIQLENIQAAFEILKKPDCVKILINF</sequence>
<accession>A0A2I7G3B2</accession>
<evidence type="ECO:0000250" key="1">
    <source>
        <dbReference type="UniProtKB" id="A0A2I7G3B3"/>
    </source>
</evidence>
<evidence type="ECO:0000250" key="2">
    <source>
        <dbReference type="UniProtKB" id="P40394"/>
    </source>
</evidence>
<evidence type="ECO:0000269" key="3">
    <source>
    </source>
</evidence>
<evidence type="ECO:0000303" key="4">
    <source>
    </source>
</evidence>
<evidence type="ECO:0000305" key="5"/>
<organism>
    <name type="scientific">Tanacetum cinerariifolium</name>
    <name type="common">Dalmatian daisy</name>
    <name type="synonym">Chrysanthemum cinerariifolium</name>
    <dbReference type="NCBI Taxonomy" id="118510"/>
    <lineage>
        <taxon>Eukaryota</taxon>
        <taxon>Viridiplantae</taxon>
        <taxon>Streptophyta</taxon>
        <taxon>Embryophyta</taxon>
        <taxon>Tracheophyta</taxon>
        <taxon>Spermatophyta</taxon>
        <taxon>Magnoliopsida</taxon>
        <taxon>eudicotyledons</taxon>
        <taxon>Gunneridae</taxon>
        <taxon>Pentapetalae</taxon>
        <taxon>asterids</taxon>
        <taxon>campanulids</taxon>
        <taxon>Asterales</taxon>
        <taxon>Asteraceae</taxon>
        <taxon>Asteroideae</taxon>
        <taxon>Anthemideae</taxon>
        <taxon>Anthemidinae</taxon>
        <taxon>Tanacetum</taxon>
    </lineage>
</organism>
<proteinExistence type="evidence at transcript level"/>
<name>ADH1_TANCI</name>